<evidence type="ECO:0000255" key="1">
    <source>
        <dbReference type="HAMAP-Rule" id="MF_00050"/>
    </source>
</evidence>
<reference key="1">
    <citation type="submission" date="2007-05" db="EMBL/GenBank/DDBJ databases">
        <title>Complete sequence of Thermotoga petrophila RKU-1.</title>
        <authorList>
            <consortium name="US DOE Joint Genome Institute"/>
            <person name="Copeland A."/>
            <person name="Lucas S."/>
            <person name="Lapidus A."/>
            <person name="Barry K."/>
            <person name="Glavina del Rio T."/>
            <person name="Dalin E."/>
            <person name="Tice H."/>
            <person name="Pitluck S."/>
            <person name="Sims D."/>
            <person name="Brettin T."/>
            <person name="Bruce D."/>
            <person name="Detter J.C."/>
            <person name="Han C."/>
            <person name="Tapia R."/>
            <person name="Schmutz J."/>
            <person name="Larimer F."/>
            <person name="Land M."/>
            <person name="Hauser L."/>
            <person name="Kyrpides N."/>
            <person name="Mikhailova N."/>
            <person name="Nelson K."/>
            <person name="Gogarten J.P."/>
            <person name="Noll K."/>
            <person name="Richardson P."/>
        </authorList>
    </citation>
    <scope>NUCLEOTIDE SEQUENCE [LARGE SCALE GENOMIC DNA]</scope>
    <source>
        <strain>ATCC BAA-488 / DSM 13995 / JCM 10881 / RKU-1</strain>
    </source>
</reference>
<gene>
    <name evidence="1" type="primary">tsf</name>
    <name type="ordered locus">Tpet_1187</name>
</gene>
<accession>A5ILX8</accession>
<proteinExistence type="inferred from homology"/>
<organism>
    <name type="scientific">Thermotoga petrophila (strain ATCC BAA-488 / DSM 13995 / JCM 10881 / RKU-1)</name>
    <dbReference type="NCBI Taxonomy" id="390874"/>
    <lineage>
        <taxon>Bacteria</taxon>
        <taxon>Thermotogati</taxon>
        <taxon>Thermotogota</taxon>
        <taxon>Thermotogae</taxon>
        <taxon>Thermotogales</taxon>
        <taxon>Thermotogaceae</taxon>
        <taxon>Thermotoga</taxon>
    </lineage>
</organism>
<comment type="function">
    <text evidence="1">Associates with the EF-Tu.GDP complex and induces the exchange of GDP to GTP. It remains bound to the aminoacyl-tRNA.EF-Tu.GTP complex up to the GTP hydrolysis stage on the ribosome.</text>
</comment>
<comment type="subcellular location">
    <subcellularLocation>
        <location evidence="1">Cytoplasm</location>
    </subcellularLocation>
</comment>
<comment type="similarity">
    <text evidence="1">Belongs to the EF-Ts family.</text>
</comment>
<keyword id="KW-0963">Cytoplasm</keyword>
<keyword id="KW-0251">Elongation factor</keyword>
<keyword id="KW-0648">Protein biosynthesis</keyword>
<protein>
    <recommendedName>
        <fullName evidence="1">Elongation factor Ts</fullName>
        <shortName evidence="1">EF-Ts</shortName>
    </recommendedName>
</protein>
<feature type="chain" id="PRO_1000006200" description="Elongation factor Ts">
    <location>
        <begin position="1"/>
        <end position="199"/>
    </location>
</feature>
<feature type="region of interest" description="Involved in Mg(2+) ion dislocation from EF-Tu" evidence="1">
    <location>
        <begin position="81"/>
        <end position="84"/>
    </location>
</feature>
<sequence>MEISMDLIKKLREMTGAGILDCKKALEEAGGDMEKAVEILRKKGAATAEKKAGRTTKEGIIVAYVHFNGRIGVLLEMNCETDFVARTDEFKELAYNLAKQVAAMKPLYVRREDVPAEVIEKEKEIYRAQIKDKPENIVEKIVEGKLEKYFEQVCLYEQTYIFDDTKKVKDLINELIAKTGENIRVSRFTRYEIGEGYED</sequence>
<dbReference type="EMBL" id="CP000702">
    <property type="protein sequence ID" value="ABQ47201.1"/>
    <property type="molecule type" value="Genomic_DNA"/>
</dbReference>
<dbReference type="RefSeq" id="WP_011943706.1">
    <property type="nucleotide sequence ID" value="NC_009486.1"/>
</dbReference>
<dbReference type="SMR" id="A5ILX8"/>
<dbReference type="STRING" id="390874.Tpet_1187"/>
<dbReference type="KEGG" id="tpt:Tpet_1187"/>
<dbReference type="eggNOG" id="COG0264">
    <property type="taxonomic scope" value="Bacteria"/>
</dbReference>
<dbReference type="HOGENOM" id="CLU_047155_1_1_0"/>
<dbReference type="Proteomes" id="UP000006558">
    <property type="component" value="Chromosome"/>
</dbReference>
<dbReference type="GO" id="GO:0005737">
    <property type="term" value="C:cytoplasm"/>
    <property type="evidence" value="ECO:0007669"/>
    <property type="project" value="UniProtKB-SubCell"/>
</dbReference>
<dbReference type="GO" id="GO:0003746">
    <property type="term" value="F:translation elongation factor activity"/>
    <property type="evidence" value="ECO:0007669"/>
    <property type="project" value="UniProtKB-UniRule"/>
</dbReference>
<dbReference type="CDD" id="cd14275">
    <property type="entry name" value="UBA_EF-Ts"/>
    <property type="match status" value="1"/>
</dbReference>
<dbReference type="FunFam" id="1.10.286.20:FF:000001">
    <property type="entry name" value="Elongation factor Ts"/>
    <property type="match status" value="1"/>
</dbReference>
<dbReference type="FunFam" id="1.10.8.10:FF:000001">
    <property type="entry name" value="Elongation factor Ts"/>
    <property type="match status" value="1"/>
</dbReference>
<dbReference type="Gene3D" id="1.10.286.20">
    <property type="match status" value="1"/>
</dbReference>
<dbReference type="Gene3D" id="1.10.8.10">
    <property type="entry name" value="DNA helicase RuvA subunit, C-terminal domain"/>
    <property type="match status" value="1"/>
</dbReference>
<dbReference type="Gene3D" id="3.30.479.20">
    <property type="entry name" value="Elongation factor Ts, dimerisation domain"/>
    <property type="match status" value="1"/>
</dbReference>
<dbReference type="HAMAP" id="MF_00050">
    <property type="entry name" value="EF_Ts"/>
    <property type="match status" value="1"/>
</dbReference>
<dbReference type="InterPro" id="IPR036402">
    <property type="entry name" value="EF-Ts_dimer_sf"/>
</dbReference>
<dbReference type="InterPro" id="IPR001816">
    <property type="entry name" value="Transl_elong_EFTs/EF1B"/>
</dbReference>
<dbReference type="InterPro" id="IPR014039">
    <property type="entry name" value="Transl_elong_EFTs/EF1B_dimer"/>
</dbReference>
<dbReference type="InterPro" id="IPR018101">
    <property type="entry name" value="Transl_elong_Ts_CS"/>
</dbReference>
<dbReference type="InterPro" id="IPR009060">
    <property type="entry name" value="UBA-like_sf"/>
</dbReference>
<dbReference type="NCBIfam" id="TIGR00116">
    <property type="entry name" value="tsf"/>
    <property type="match status" value="1"/>
</dbReference>
<dbReference type="PANTHER" id="PTHR11741">
    <property type="entry name" value="ELONGATION FACTOR TS"/>
    <property type="match status" value="1"/>
</dbReference>
<dbReference type="PANTHER" id="PTHR11741:SF0">
    <property type="entry name" value="ELONGATION FACTOR TS, MITOCHONDRIAL"/>
    <property type="match status" value="1"/>
</dbReference>
<dbReference type="Pfam" id="PF00889">
    <property type="entry name" value="EF_TS"/>
    <property type="match status" value="1"/>
</dbReference>
<dbReference type="SUPFAM" id="SSF54713">
    <property type="entry name" value="Elongation factor Ts (EF-Ts), dimerisation domain"/>
    <property type="match status" value="1"/>
</dbReference>
<dbReference type="SUPFAM" id="SSF46934">
    <property type="entry name" value="UBA-like"/>
    <property type="match status" value="1"/>
</dbReference>
<dbReference type="PROSITE" id="PS01126">
    <property type="entry name" value="EF_TS_1"/>
    <property type="match status" value="1"/>
</dbReference>
<dbReference type="PROSITE" id="PS01127">
    <property type="entry name" value="EF_TS_2"/>
    <property type="match status" value="1"/>
</dbReference>
<name>EFTS_THEP1</name>